<accession>A7X393</accession>
<evidence type="ECO:0000255" key="1">
    <source>
        <dbReference type="HAMAP-Rule" id="MF_00087"/>
    </source>
</evidence>
<reference key="1">
    <citation type="journal article" date="2008" name="Antimicrob. Agents Chemother.">
        <title>Mutated response regulator graR is responsible for phenotypic conversion of Staphylococcus aureus from heterogeneous vancomycin-intermediate resistance to vancomycin-intermediate resistance.</title>
        <authorList>
            <person name="Neoh H.-M."/>
            <person name="Cui L."/>
            <person name="Yuzawa H."/>
            <person name="Takeuchi F."/>
            <person name="Matsuo M."/>
            <person name="Hiramatsu K."/>
        </authorList>
    </citation>
    <scope>NUCLEOTIDE SEQUENCE [LARGE SCALE GENOMIC DNA]</scope>
    <source>
        <strain>Mu3 / ATCC 700698</strain>
    </source>
</reference>
<feature type="chain" id="PRO_1000004700" description="Glutamyl-tRNA reductase">
    <location>
        <begin position="1"/>
        <end position="448"/>
    </location>
</feature>
<feature type="active site" description="Nucleophile" evidence="1">
    <location>
        <position position="50"/>
    </location>
</feature>
<feature type="binding site" evidence="1">
    <location>
        <begin position="49"/>
        <end position="52"/>
    </location>
    <ligand>
        <name>substrate</name>
    </ligand>
</feature>
<feature type="binding site" evidence="1">
    <location>
        <position position="109"/>
    </location>
    <ligand>
        <name>substrate</name>
    </ligand>
</feature>
<feature type="binding site" evidence="1">
    <location>
        <begin position="114"/>
        <end position="116"/>
    </location>
    <ligand>
        <name>substrate</name>
    </ligand>
</feature>
<feature type="binding site" evidence="1">
    <location>
        <position position="120"/>
    </location>
    <ligand>
        <name>substrate</name>
    </ligand>
</feature>
<feature type="binding site" evidence="1">
    <location>
        <begin position="189"/>
        <end position="194"/>
    </location>
    <ligand>
        <name>NADP(+)</name>
        <dbReference type="ChEBI" id="CHEBI:58349"/>
    </ligand>
</feature>
<feature type="site" description="Important for activity" evidence="1">
    <location>
        <position position="99"/>
    </location>
</feature>
<name>HEM1_STAA1</name>
<sequence length="448" mass="50099">MHFIAISINHRTADVALREQVAFRDDALRIAHEDLYETKSILENVILSTCNRTEVYAVVDQIHTGRYYIQRFLARAFGFEVDDIKAMSEVKVGDEAVEHLLRVTSGLDSIVLGETQILGQIRDAFFLAQSTGTTGTIFNHLFKQAITFAKRAHNETDIADNAVSVSYAAVELAKKVFGKLKSKQAIIIGAGEMSELSLLNLLGSGITDITVVNRTIENAMKLAAKHQVKYDELSSLPNLLESADIVISSTSAQSYIITNEMIERIAENRKQDSLVLIDIAVPRDIEPGISAITNIFNYDVDDLKGLVDANLRERQLAAATISEQIPAEIHAHNEWISMLGVVPVIRALREKAMAIQAETMDSIDRKLPGLSERERKIISKHTKSIINQMLKDPIKQAKELSSDKKSNEKLELFQNIFDIEAECPHEQAKQQKESKVKEISARRIFSFE</sequence>
<dbReference type="EC" id="1.2.1.70" evidence="1"/>
<dbReference type="EMBL" id="AP009324">
    <property type="protein sequence ID" value="BAF78542.1"/>
    <property type="molecule type" value="Genomic_DNA"/>
</dbReference>
<dbReference type="RefSeq" id="WP_000545451.1">
    <property type="nucleotide sequence ID" value="NZ_CTYB01000017.1"/>
</dbReference>
<dbReference type="SMR" id="A7X393"/>
<dbReference type="KEGG" id="saw:SAHV_1659"/>
<dbReference type="HOGENOM" id="CLU_035113_2_2_9"/>
<dbReference type="UniPathway" id="UPA00251">
    <property type="reaction ID" value="UER00316"/>
</dbReference>
<dbReference type="GO" id="GO:0008883">
    <property type="term" value="F:glutamyl-tRNA reductase activity"/>
    <property type="evidence" value="ECO:0007669"/>
    <property type="project" value="UniProtKB-UniRule"/>
</dbReference>
<dbReference type="GO" id="GO:0050661">
    <property type="term" value="F:NADP binding"/>
    <property type="evidence" value="ECO:0007669"/>
    <property type="project" value="InterPro"/>
</dbReference>
<dbReference type="GO" id="GO:0006782">
    <property type="term" value="P:protoporphyrinogen IX biosynthetic process"/>
    <property type="evidence" value="ECO:0007669"/>
    <property type="project" value="UniProtKB-UniRule"/>
</dbReference>
<dbReference type="CDD" id="cd05213">
    <property type="entry name" value="NAD_bind_Glutamyl_tRNA_reduct"/>
    <property type="match status" value="1"/>
</dbReference>
<dbReference type="FunFam" id="3.30.460.30:FF:000001">
    <property type="entry name" value="Glutamyl-tRNA reductase"/>
    <property type="match status" value="1"/>
</dbReference>
<dbReference type="FunFam" id="3.40.50.720:FF:000031">
    <property type="entry name" value="Glutamyl-tRNA reductase"/>
    <property type="match status" value="1"/>
</dbReference>
<dbReference type="Gene3D" id="3.30.460.30">
    <property type="entry name" value="Glutamyl-tRNA reductase, N-terminal domain"/>
    <property type="match status" value="1"/>
</dbReference>
<dbReference type="Gene3D" id="3.40.50.720">
    <property type="entry name" value="NAD(P)-binding Rossmann-like Domain"/>
    <property type="match status" value="1"/>
</dbReference>
<dbReference type="HAMAP" id="MF_00087">
    <property type="entry name" value="Glu_tRNA_reductase"/>
    <property type="match status" value="1"/>
</dbReference>
<dbReference type="InterPro" id="IPR000343">
    <property type="entry name" value="4pyrrol_synth_GluRdtase"/>
</dbReference>
<dbReference type="InterPro" id="IPR015896">
    <property type="entry name" value="4pyrrol_synth_GluRdtase_dimer"/>
</dbReference>
<dbReference type="InterPro" id="IPR015895">
    <property type="entry name" value="4pyrrol_synth_GluRdtase_N"/>
</dbReference>
<dbReference type="InterPro" id="IPR018214">
    <property type="entry name" value="GluRdtase_CS"/>
</dbReference>
<dbReference type="InterPro" id="IPR036453">
    <property type="entry name" value="GluRdtase_dimer_dom_sf"/>
</dbReference>
<dbReference type="InterPro" id="IPR036343">
    <property type="entry name" value="GluRdtase_N_sf"/>
</dbReference>
<dbReference type="InterPro" id="IPR036291">
    <property type="entry name" value="NAD(P)-bd_dom_sf"/>
</dbReference>
<dbReference type="InterPro" id="IPR006151">
    <property type="entry name" value="Shikm_DH/Glu-tRNA_Rdtase"/>
</dbReference>
<dbReference type="NCBIfam" id="TIGR01035">
    <property type="entry name" value="hemA"/>
    <property type="match status" value="1"/>
</dbReference>
<dbReference type="PANTHER" id="PTHR43120">
    <property type="entry name" value="GLUTAMYL-TRNA REDUCTASE 1, CHLOROPLASTIC"/>
    <property type="match status" value="1"/>
</dbReference>
<dbReference type="PANTHER" id="PTHR43120:SF1">
    <property type="entry name" value="GLUTAMYL-TRNA REDUCTASE 1, CHLOROPLASTIC"/>
    <property type="match status" value="1"/>
</dbReference>
<dbReference type="Pfam" id="PF00745">
    <property type="entry name" value="GlutR_dimer"/>
    <property type="match status" value="1"/>
</dbReference>
<dbReference type="Pfam" id="PF05201">
    <property type="entry name" value="GlutR_N"/>
    <property type="match status" value="1"/>
</dbReference>
<dbReference type="Pfam" id="PF01488">
    <property type="entry name" value="Shikimate_DH"/>
    <property type="match status" value="1"/>
</dbReference>
<dbReference type="PIRSF" id="PIRSF000445">
    <property type="entry name" value="4pyrrol_synth_GluRdtase"/>
    <property type="match status" value="1"/>
</dbReference>
<dbReference type="SUPFAM" id="SSF69742">
    <property type="entry name" value="Glutamyl tRNA-reductase catalytic, N-terminal domain"/>
    <property type="match status" value="1"/>
</dbReference>
<dbReference type="SUPFAM" id="SSF69075">
    <property type="entry name" value="Glutamyl tRNA-reductase dimerization domain"/>
    <property type="match status" value="1"/>
</dbReference>
<dbReference type="SUPFAM" id="SSF51735">
    <property type="entry name" value="NAD(P)-binding Rossmann-fold domains"/>
    <property type="match status" value="1"/>
</dbReference>
<dbReference type="PROSITE" id="PS00747">
    <property type="entry name" value="GLUTR"/>
    <property type="match status" value="1"/>
</dbReference>
<comment type="function">
    <text evidence="1">Catalyzes the NADPH-dependent reduction of glutamyl-tRNA(Glu) to glutamate 1-semialdehyde (GSA).</text>
</comment>
<comment type="catalytic activity">
    <reaction evidence="1">
        <text>(S)-4-amino-5-oxopentanoate + tRNA(Glu) + NADP(+) = L-glutamyl-tRNA(Glu) + NADPH + H(+)</text>
        <dbReference type="Rhea" id="RHEA:12344"/>
        <dbReference type="Rhea" id="RHEA-COMP:9663"/>
        <dbReference type="Rhea" id="RHEA-COMP:9680"/>
        <dbReference type="ChEBI" id="CHEBI:15378"/>
        <dbReference type="ChEBI" id="CHEBI:57501"/>
        <dbReference type="ChEBI" id="CHEBI:57783"/>
        <dbReference type="ChEBI" id="CHEBI:58349"/>
        <dbReference type="ChEBI" id="CHEBI:78442"/>
        <dbReference type="ChEBI" id="CHEBI:78520"/>
        <dbReference type="EC" id="1.2.1.70"/>
    </reaction>
</comment>
<comment type="pathway">
    <text evidence="1">Porphyrin-containing compound metabolism; protoporphyrin-IX biosynthesis; 5-aminolevulinate from L-glutamyl-tRNA(Glu): step 1/2.</text>
</comment>
<comment type="subunit">
    <text evidence="1">Homodimer.</text>
</comment>
<comment type="domain">
    <text evidence="1">Possesses an unusual extended V-shaped dimeric structure with each monomer consisting of three distinct domains arranged along a curved 'spinal' alpha-helix. The N-terminal catalytic domain specifically recognizes the glutamate moiety of the substrate. The second domain is the NADPH-binding domain, and the third C-terminal domain is responsible for dimerization.</text>
</comment>
<comment type="miscellaneous">
    <text evidence="1">During catalysis, the active site Cys acts as a nucleophile attacking the alpha-carbonyl group of tRNA-bound glutamate with the formation of a thioester intermediate between enzyme and glutamate, and the concomitant release of tRNA(Glu). The thioester intermediate is finally reduced by direct hydride transfer from NADPH, to form the product GSA.</text>
</comment>
<comment type="similarity">
    <text evidence="1">Belongs to the glutamyl-tRNA reductase family.</text>
</comment>
<keyword id="KW-0521">NADP</keyword>
<keyword id="KW-0560">Oxidoreductase</keyword>
<keyword id="KW-0627">Porphyrin biosynthesis</keyword>
<protein>
    <recommendedName>
        <fullName evidence="1">Glutamyl-tRNA reductase</fullName>
        <shortName evidence="1">GluTR</shortName>
        <ecNumber evidence="1">1.2.1.70</ecNumber>
    </recommendedName>
</protein>
<proteinExistence type="inferred from homology"/>
<organism>
    <name type="scientific">Staphylococcus aureus (strain Mu3 / ATCC 700698)</name>
    <dbReference type="NCBI Taxonomy" id="418127"/>
    <lineage>
        <taxon>Bacteria</taxon>
        <taxon>Bacillati</taxon>
        <taxon>Bacillota</taxon>
        <taxon>Bacilli</taxon>
        <taxon>Bacillales</taxon>
        <taxon>Staphylococcaceae</taxon>
        <taxon>Staphylococcus</taxon>
    </lineage>
</organism>
<gene>
    <name evidence="1" type="primary">hemA</name>
    <name type="ordered locus">SAHV_1659</name>
</gene>